<sequence>MRKDLLILTDILKANVAPALGCTEPGAVAYAVSKAREILGEEPREVYVAVDRDILKNGMFVSIPGTKEKGLVFAAALALVCGKSEYKLEALREATEEDIKKAHKIVNRKAVKIVLEKDAEGLYIKASVVGDKHRATVIVKDAHDNIVYEERDGVVLKAKEENLKEDKSWLKAKIKEFTIEDFLDYCDSVDFKEIEFIGEGIEMNKKIAYAGLNEEVGVGIGKMLKRQIRDEESLAKALTAAASEARMSGYPLPVMSSAGSGNHGLVAILPIAIIGEERGYDREKIIRAITLSHLLTAYVKAYIGVLSPICGCGVAAGVGMSAGLTYLLGGSRKQIKGAVSNMLAGLSGMICDGAKIGCAYKLSISVTAALEASKFAMENIFIPSDNGILGNTAEESIKNLGRISVEGMKNADDVILDIMLKKQ</sequence>
<dbReference type="EMBL" id="AE008691">
    <property type="protein sequence ID" value="AAM23565.1"/>
    <property type="molecule type" value="Genomic_DNA"/>
</dbReference>
<dbReference type="RefSeq" id="WP_011024737.1">
    <property type="nucleotide sequence ID" value="NC_003869.1"/>
</dbReference>
<dbReference type="SMR" id="Q8RCY6"/>
<dbReference type="STRING" id="273068.TTE0269"/>
<dbReference type="KEGG" id="tte:TTE0269"/>
<dbReference type="eggNOG" id="COG3681">
    <property type="taxonomic scope" value="Bacteria"/>
</dbReference>
<dbReference type="HOGENOM" id="CLU_051840_0_0_9"/>
<dbReference type="OrthoDB" id="41906at2"/>
<dbReference type="Proteomes" id="UP000000555">
    <property type="component" value="Chromosome"/>
</dbReference>
<dbReference type="GO" id="GO:0080146">
    <property type="term" value="F:L-cysteine desulfhydrase activity"/>
    <property type="evidence" value="ECO:0007669"/>
    <property type="project" value="TreeGrafter"/>
</dbReference>
<dbReference type="GO" id="GO:0019450">
    <property type="term" value="P:L-cysteine catabolic process to pyruvate"/>
    <property type="evidence" value="ECO:0007669"/>
    <property type="project" value="TreeGrafter"/>
</dbReference>
<dbReference type="HAMAP" id="MF_01845">
    <property type="entry name" value="UPF0597"/>
    <property type="match status" value="1"/>
</dbReference>
<dbReference type="InterPro" id="IPR005130">
    <property type="entry name" value="Ser_deHydtase-like_asu"/>
</dbReference>
<dbReference type="InterPro" id="IPR021144">
    <property type="entry name" value="UPF0597"/>
</dbReference>
<dbReference type="PANTHER" id="PTHR30501">
    <property type="entry name" value="UPF0597 PROTEIN YHAM"/>
    <property type="match status" value="1"/>
</dbReference>
<dbReference type="PANTHER" id="PTHR30501:SF2">
    <property type="entry name" value="UPF0597 PROTEIN YHAM"/>
    <property type="match status" value="1"/>
</dbReference>
<dbReference type="Pfam" id="PF03313">
    <property type="entry name" value="SDH_alpha"/>
    <property type="match status" value="1"/>
</dbReference>
<dbReference type="PIRSF" id="PIRSF006054">
    <property type="entry name" value="UCP006054"/>
    <property type="match status" value="1"/>
</dbReference>
<reference key="1">
    <citation type="journal article" date="2002" name="Genome Res.">
        <title>A complete sequence of the T. tengcongensis genome.</title>
        <authorList>
            <person name="Bao Q."/>
            <person name="Tian Y."/>
            <person name="Li W."/>
            <person name="Xu Z."/>
            <person name="Xuan Z."/>
            <person name="Hu S."/>
            <person name="Dong W."/>
            <person name="Yang J."/>
            <person name="Chen Y."/>
            <person name="Xue Y."/>
            <person name="Xu Y."/>
            <person name="Lai X."/>
            <person name="Huang L."/>
            <person name="Dong X."/>
            <person name="Ma Y."/>
            <person name="Ling L."/>
            <person name="Tan H."/>
            <person name="Chen R."/>
            <person name="Wang J."/>
            <person name="Yu J."/>
            <person name="Yang H."/>
        </authorList>
    </citation>
    <scope>NUCLEOTIDE SEQUENCE [LARGE SCALE GENOMIC DNA]</scope>
    <source>
        <strain>DSM 15242 / JCM 11007 / NBRC 100824 / MB4</strain>
    </source>
</reference>
<keyword id="KW-1185">Reference proteome</keyword>
<feature type="chain" id="PRO_0000339862" description="UPF0597 protein TTE0269">
    <location>
        <begin position="1"/>
        <end position="423"/>
    </location>
</feature>
<protein>
    <recommendedName>
        <fullName evidence="1">UPF0597 protein TTE0269</fullName>
    </recommendedName>
</protein>
<proteinExistence type="inferred from homology"/>
<gene>
    <name type="ordered locus">TTE0269</name>
</gene>
<evidence type="ECO:0000255" key="1">
    <source>
        <dbReference type="HAMAP-Rule" id="MF_01845"/>
    </source>
</evidence>
<name>Y269_CALS4</name>
<organism>
    <name type="scientific">Caldanaerobacter subterraneus subsp. tengcongensis (strain DSM 15242 / JCM 11007 / NBRC 100824 / MB4)</name>
    <name type="common">Thermoanaerobacter tengcongensis</name>
    <dbReference type="NCBI Taxonomy" id="273068"/>
    <lineage>
        <taxon>Bacteria</taxon>
        <taxon>Bacillati</taxon>
        <taxon>Bacillota</taxon>
        <taxon>Clostridia</taxon>
        <taxon>Thermoanaerobacterales</taxon>
        <taxon>Thermoanaerobacteraceae</taxon>
        <taxon>Caldanaerobacter</taxon>
    </lineage>
</organism>
<accession>Q8RCY6</accession>
<comment type="similarity">
    <text evidence="1">Belongs to the UPF0597 family.</text>
</comment>